<sequence>MRVLGGEVSPFTARARLALDLRGVAYELLDEPLGPKKSDRLLAANPVYGKIPVLLLPDGRAICESAVIVQYIEDVARESGGAEAGSLLLPDDPYERAMHRFWTAFIDDKFWPALDAVSLAPTPGARAQAAEDTRAALSLLEEAFKDRSNGRAFFSGGDAAPGLLDLALGCFLPALRACERLHGLSLIDASATPLLDGWSQRFAAHPAAKRVLPDTEKVVQFTRFLQVQAQFRVHVS</sequence>
<organism>
    <name type="scientific">Zea mays</name>
    <name type="common">Maize</name>
    <dbReference type="NCBI Taxonomy" id="4577"/>
    <lineage>
        <taxon>Eukaryota</taxon>
        <taxon>Viridiplantae</taxon>
        <taxon>Streptophyta</taxon>
        <taxon>Embryophyta</taxon>
        <taxon>Tracheophyta</taxon>
        <taxon>Spermatophyta</taxon>
        <taxon>Magnoliopsida</taxon>
        <taxon>Liliopsida</taxon>
        <taxon>Poales</taxon>
        <taxon>Poaceae</taxon>
        <taxon>PACMAD clade</taxon>
        <taxon>Panicoideae</taxon>
        <taxon>Andropogonodae</taxon>
        <taxon>Andropogoneae</taxon>
        <taxon>Tripsacinae</taxon>
        <taxon>Zea</taxon>
    </lineage>
</organism>
<dbReference type="EC" id="2.5.1.18"/>
<dbReference type="EMBL" id="U14599">
    <property type="protein sequence ID" value="AAA50245.1"/>
    <property type="molecule type" value="Genomic_DNA"/>
</dbReference>
<dbReference type="SMR" id="P50472"/>
<dbReference type="FunCoup" id="P50472">
    <property type="interactions" value="83"/>
</dbReference>
<dbReference type="STRING" id="4577.P50472"/>
<dbReference type="PaxDb" id="4577-GRMZM2G016241_P02"/>
<dbReference type="MaizeGDB" id="64140"/>
<dbReference type="eggNOG" id="KOG0406">
    <property type="taxonomic scope" value="Eukaryota"/>
</dbReference>
<dbReference type="InParanoid" id="P50472"/>
<dbReference type="UniPathway" id="UPA00009"/>
<dbReference type="Proteomes" id="UP000007305">
    <property type="component" value="Unplaced"/>
</dbReference>
<dbReference type="ExpressionAtlas" id="P50472">
    <property type="expression patterns" value="baseline"/>
</dbReference>
<dbReference type="GO" id="GO:0005737">
    <property type="term" value="C:cytoplasm"/>
    <property type="evidence" value="ECO:0000318"/>
    <property type="project" value="GO_Central"/>
</dbReference>
<dbReference type="GO" id="GO:0004364">
    <property type="term" value="F:glutathione transferase activity"/>
    <property type="evidence" value="ECO:0000318"/>
    <property type="project" value="GO_Central"/>
</dbReference>
<dbReference type="GO" id="GO:0009718">
    <property type="term" value="P:anthocyanin-containing compound biosynthetic process"/>
    <property type="evidence" value="ECO:0007669"/>
    <property type="project" value="UniProtKB-UniPathway"/>
</dbReference>
<dbReference type="GO" id="GO:0006749">
    <property type="term" value="P:glutathione metabolic process"/>
    <property type="evidence" value="ECO:0000318"/>
    <property type="project" value="GO_Central"/>
</dbReference>
<dbReference type="CDD" id="cd03185">
    <property type="entry name" value="GST_C_Tau"/>
    <property type="match status" value="1"/>
</dbReference>
<dbReference type="CDD" id="cd03058">
    <property type="entry name" value="GST_N_Tau"/>
    <property type="match status" value="1"/>
</dbReference>
<dbReference type="FunFam" id="1.20.1050.10:FF:000016">
    <property type="entry name" value="Glutathione S-transferase U9"/>
    <property type="match status" value="1"/>
</dbReference>
<dbReference type="FunFam" id="3.40.30.10:FF:000294">
    <property type="entry name" value="Glutathione S-transferase, N-terminal domain containing protein, expressed"/>
    <property type="match status" value="1"/>
</dbReference>
<dbReference type="Gene3D" id="1.20.1050.10">
    <property type="match status" value="1"/>
</dbReference>
<dbReference type="Gene3D" id="3.40.30.10">
    <property type="entry name" value="Glutaredoxin"/>
    <property type="match status" value="1"/>
</dbReference>
<dbReference type="InterPro" id="IPR010987">
    <property type="entry name" value="Glutathione-S-Trfase_C-like"/>
</dbReference>
<dbReference type="InterPro" id="IPR036282">
    <property type="entry name" value="Glutathione-S-Trfase_C_sf"/>
</dbReference>
<dbReference type="InterPro" id="IPR040079">
    <property type="entry name" value="Glutathione_S-Trfase"/>
</dbReference>
<dbReference type="InterPro" id="IPR004045">
    <property type="entry name" value="Glutathione_S-Trfase_N"/>
</dbReference>
<dbReference type="InterPro" id="IPR045074">
    <property type="entry name" value="GST_C_Tau"/>
</dbReference>
<dbReference type="InterPro" id="IPR045073">
    <property type="entry name" value="Omega/Tau-like"/>
</dbReference>
<dbReference type="InterPro" id="IPR036249">
    <property type="entry name" value="Thioredoxin-like_sf"/>
</dbReference>
<dbReference type="PANTHER" id="PTHR11260:SF615">
    <property type="entry name" value="GLUTATHIONE S-TRANSFERASE U17"/>
    <property type="match status" value="1"/>
</dbReference>
<dbReference type="PANTHER" id="PTHR11260">
    <property type="entry name" value="GLUTATHIONE S-TRANSFERASE, GST, SUPERFAMILY, GST DOMAIN CONTAINING"/>
    <property type="match status" value="1"/>
</dbReference>
<dbReference type="Pfam" id="PF13410">
    <property type="entry name" value="GST_C_2"/>
    <property type="match status" value="1"/>
</dbReference>
<dbReference type="Pfam" id="PF13409">
    <property type="entry name" value="GST_N_2"/>
    <property type="match status" value="1"/>
</dbReference>
<dbReference type="SFLD" id="SFLDS00019">
    <property type="entry name" value="Glutathione_Transferase_(cytos"/>
    <property type="match status" value="1"/>
</dbReference>
<dbReference type="SFLD" id="SFLDG01152">
    <property type="entry name" value="Main.3:_Omega-_and_Tau-like"/>
    <property type="match status" value="1"/>
</dbReference>
<dbReference type="SUPFAM" id="SSF47616">
    <property type="entry name" value="GST C-terminal domain-like"/>
    <property type="match status" value="1"/>
</dbReference>
<dbReference type="SUPFAM" id="SSF52833">
    <property type="entry name" value="Thioredoxin-like"/>
    <property type="match status" value="1"/>
</dbReference>
<dbReference type="PROSITE" id="PS50405">
    <property type="entry name" value="GST_CTER"/>
    <property type="match status" value="1"/>
</dbReference>
<dbReference type="PROSITE" id="PS50404">
    <property type="entry name" value="GST_NTER"/>
    <property type="match status" value="1"/>
</dbReference>
<name>GSTX2_MAIZE</name>
<feature type="chain" id="PRO_0000185861" description="Probable glutathione S-transferase BZ2">
    <location>
        <begin position="1"/>
        <end position="236"/>
    </location>
</feature>
<feature type="domain" description="GST N-terminal">
    <location>
        <begin position="1"/>
        <end position="80"/>
    </location>
</feature>
<feature type="domain" description="GST C-terminal">
    <location>
        <begin position="92"/>
        <end position="221"/>
    </location>
</feature>
<feature type="binding site" evidence="1">
    <location>
        <position position="9"/>
    </location>
    <ligand>
        <name>glutathione</name>
        <dbReference type="ChEBI" id="CHEBI:57925"/>
    </ligand>
</feature>
<feature type="binding site" evidence="1">
    <location>
        <position position="37"/>
    </location>
    <ligand>
        <name>glutathione</name>
        <dbReference type="ChEBI" id="CHEBI:57925"/>
    </ligand>
</feature>
<feature type="binding site" evidence="1">
    <location>
        <position position="51"/>
    </location>
    <ligand>
        <name>glutathione</name>
        <dbReference type="ChEBI" id="CHEBI:57925"/>
    </ligand>
</feature>
<feature type="binding site" evidence="1">
    <location>
        <begin position="64"/>
        <end position="65"/>
    </location>
    <ligand>
        <name>glutathione</name>
        <dbReference type="ChEBI" id="CHEBI:57925"/>
    </ligand>
</feature>
<gene>
    <name type="primary">BZ2</name>
</gene>
<protein>
    <recommendedName>
        <fullName>Probable glutathione S-transferase BZ2</fullName>
        <ecNumber>2.5.1.18</ecNumber>
    </recommendedName>
    <alternativeName>
        <fullName>Protein bronze-2</fullName>
    </alternativeName>
</protein>
<keyword id="KW-1185">Reference proteome</keyword>
<keyword id="KW-0808">Transferase</keyword>
<comment type="catalytic activity">
    <reaction>
        <text>RX + glutathione = an S-substituted glutathione + a halide anion + H(+)</text>
        <dbReference type="Rhea" id="RHEA:16437"/>
        <dbReference type="ChEBI" id="CHEBI:15378"/>
        <dbReference type="ChEBI" id="CHEBI:16042"/>
        <dbReference type="ChEBI" id="CHEBI:17792"/>
        <dbReference type="ChEBI" id="CHEBI:57925"/>
        <dbReference type="ChEBI" id="CHEBI:90779"/>
        <dbReference type="EC" id="2.5.1.18"/>
    </reaction>
</comment>
<comment type="pathway">
    <text>Pigment biosynthesis; anthocyanin biosynthesis.</text>
</comment>
<comment type="similarity">
    <text evidence="2">Belongs to the GST superfamily. HSP26 family.</text>
</comment>
<accession>P50472</accession>
<evidence type="ECO:0000250" key="1"/>
<evidence type="ECO:0000305" key="2"/>
<reference key="1">
    <citation type="journal article" date="1990" name="Plant Cell">
        <title>Bronze-2 gene of maize: reconstruction of a wild-type allele and analysis of transcription and splicing.</title>
        <authorList>
            <person name="Nash J."/>
            <person name="Luehrsen K.R."/>
            <person name="Walbot V."/>
        </authorList>
    </citation>
    <scope>NUCLEOTIDE SEQUENCE [GENOMIC DNA]</scope>
    <source>
        <tissue>Seedling</tissue>
    </source>
</reference>
<reference key="2">
    <citation type="journal article" date="1991" name="Plant Cell">
        <authorList>
            <person name="Nash J."/>
            <person name="Luehrsen K.R."/>
            <person name="Walbot V."/>
        </authorList>
    </citation>
    <scope>ERRATUM OF PUBMED:1967051</scope>
</reference>
<proteinExistence type="inferred from homology"/>